<reference key="1">
    <citation type="journal article" date="2010" name="BMC Genomics">
        <title>A genomic perspective on the potential of Actinobacillus succinogenes for industrial succinate production.</title>
        <authorList>
            <person name="McKinlay J.B."/>
            <person name="Laivenieks M."/>
            <person name="Schindler B.D."/>
            <person name="McKinlay A.A."/>
            <person name="Siddaramappa S."/>
            <person name="Challacombe J.F."/>
            <person name="Lowry S.R."/>
            <person name="Clum A."/>
            <person name="Lapidus A.L."/>
            <person name="Burkhart K.B."/>
            <person name="Harkins V."/>
            <person name="Vieille C."/>
        </authorList>
    </citation>
    <scope>NUCLEOTIDE SEQUENCE [LARGE SCALE GENOMIC DNA]</scope>
    <source>
        <strain>ATCC 55618 / DSM 22257 / CCUG 43843 / 130Z</strain>
    </source>
</reference>
<gene>
    <name evidence="1" type="primary">lysS</name>
    <name type="ordered locus">Asuc_1515</name>
</gene>
<organism>
    <name type="scientific">Actinobacillus succinogenes (strain ATCC 55618 / DSM 22257 / CCUG 43843 / 130Z)</name>
    <dbReference type="NCBI Taxonomy" id="339671"/>
    <lineage>
        <taxon>Bacteria</taxon>
        <taxon>Pseudomonadati</taxon>
        <taxon>Pseudomonadota</taxon>
        <taxon>Gammaproteobacteria</taxon>
        <taxon>Pasteurellales</taxon>
        <taxon>Pasteurellaceae</taxon>
        <taxon>Actinobacillus</taxon>
    </lineage>
</organism>
<proteinExistence type="inferred from homology"/>
<protein>
    <recommendedName>
        <fullName evidence="1">Lysine--tRNA ligase</fullName>
        <ecNumber evidence="1">6.1.1.6</ecNumber>
    </recommendedName>
    <alternativeName>
        <fullName evidence="1">Lysyl-tRNA synthetase</fullName>
        <shortName evidence="1">LysRS</shortName>
    </alternativeName>
</protein>
<dbReference type="EC" id="6.1.1.6" evidence="1"/>
<dbReference type="EMBL" id="CP000746">
    <property type="protein sequence ID" value="ABR74873.1"/>
    <property type="molecule type" value="Genomic_DNA"/>
</dbReference>
<dbReference type="RefSeq" id="WP_012073250.1">
    <property type="nucleotide sequence ID" value="NC_009655.1"/>
</dbReference>
<dbReference type="SMR" id="A6VPH6"/>
<dbReference type="STRING" id="339671.Asuc_1515"/>
<dbReference type="KEGG" id="asu:Asuc_1515"/>
<dbReference type="eggNOG" id="COG1190">
    <property type="taxonomic scope" value="Bacteria"/>
</dbReference>
<dbReference type="HOGENOM" id="CLU_008255_6_0_6"/>
<dbReference type="OrthoDB" id="9802326at2"/>
<dbReference type="Proteomes" id="UP000001114">
    <property type="component" value="Chromosome"/>
</dbReference>
<dbReference type="GO" id="GO:0005829">
    <property type="term" value="C:cytosol"/>
    <property type="evidence" value="ECO:0007669"/>
    <property type="project" value="TreeGrafter"/>
</dbReference>
<dbReference type="GO" id="GO:0005524">
    <property type="term" value="F:ATP binding"/>
    <property type="evidence" value="ECO:0007669"/>
    <property type="project" value="UniProtKB-UniRule"/>
</dbReference>
<dbReference type="GO" id="GO:0004824">
    <property type="term" value="F:lysine-tRNA ligase activity"/>
    <property type="evidence" value="ECO:0007669"/>
    <property type="project" value="UniProtKB-UniRule"/>
</dbReference>
<dbReference type="GO" id="GO:0000287">
    <property type="term" value="F:magnesium ion binding"/>
    <property type="evidence" value="ECO:0007669"/>
    <property type="project" value="UniProtKB-UniRule"/>
</dbReference>
<dbReference type="GO" id="GO:0000049">
    <property type="term" value="F:tRNA binding"/>
    <property type="evidence" value="ECO:0007669"/>
    <property type="project" value="TreeGrafter"/>
</dbReference>
<dbReference type="GO" id="GO:0006430">
    <property type="term" value="P:lysyl-tRNA aminoacylation"/>
    <property type="evidence" value="ECO:0007669"/>
    <property type="project" value="UniProtKB-UniRule"/>
</dbReference>
<dbReference type="CDD" id="cd00775">
    <property type="entry name" value="LysRS_core"/>
    <property type="match status" value="1"/>
</dbReference>
<dbReference type="CDD" id="cd04322">
    <property type="entry name" value="LysRS_N"/>
    <property type="match status" value="1"/>
</dbReference>
<dbReference type="FunFam" id="2.40.50.140:FF:000024">
    <property type="entry name" value="Lysine--tRNA ligase"/>
    <property type="match status" value="1"/>
</dbReference>
<dbReference type="FunFam" id="3.30.930.10:FF:000001">
    <property type="entry name" value="Lysine--tRNA ligase"/>
    <property type="match status" value="1"/>
</dbReference>
<dbReference type="Gene3D" id="3.30.930.10">
    <property type="entry name" value="Bira Bifunctional Protein, Domain 2"/>
    <property type="match status" value="1"/>
</dbReference>
<dbReference type="Gene3D" id="2.40.50.140">
    <property type="entry name" value="Nucleic acid-binding proteins"/>
    <property type="match status" value="1"/>
</dbReference>
<dbReference type="HAMAP" id="MF_00252">
    <property type="entry name" value="Lys_tRNA_synth_class2"/>
    <property type="match status" value="1"/>
</dbReference>
<dbReference type="InterPro" id="IPR004364">
    <property type="entry name" value="Aa-tRNA-synt_II"/>
</dbReference>
<dbReference type="InterPro" id="IPR006195">
    <property type="entry name" value="aa-tRNA-synth_II"/>
</dbReference>
<dbReference type="InterPro" id="IPR045864">
    <property type="entry name" value="aa-tRNA-synth_II/BPL/LPL"/>
</dbReference>
<dbReference type="InterPro" id="IPR002313">
    <property type="entry name" value="Lys-tRNA-ligase_II"/>
</dbReference>
<dbReference type="InterPro" id="IPR034762">
    <property type="entry name" value="Lys-tRNA-ligase_II_bac/euk"/>
</dbReference>
<dbReference type="InterPro" id="IPR044136">
    <property type="entry name" value="Lys-tRNA-ligase_II_N"/>
</dbReference>
<dbReference type="InterPro" id="IPR018149">
    <property type="entry name" value="Lys-tRNA-synth_II_C"/>
</dbReference>
<dbReference type="InterPro" id="IPR012340">
    <property type="entry name" value="NA-bd_OB-fold"/>
</dbReference>
<dbReference type="InterPro" id="IPR004365">
    <property type="entry name" value="NA-bd_OB_tRNA"/>
</dbReference>
<dbReference type="NCBIfam" id="TIGR00499">
    <property type="entry name" value="lysS_bact"/>
    <property type="match status" value="1"/>
</dbReference>
<dbReference type="NCBIfam" id="NF001756">
    <property type="entry name" value="PRK00484.1"/>
    <property type="match status" value="1"/>
</dbReference>
<dbReference type="PANTHER" id="PTHR42918:SF15">
    <property type="entry name" value="LYSINE--TRNA LIGASE, CHLOROPLASTIC_MITOCHONDRIAL"/>
    <property type="match status" value="1"/>
</dbReference>
<dbReference type="PANTHER" id="PTHR42918">
    <property type="entry name" value="LYSYL-TRNA SYNTHETASE"/>
    <property type="match status" value="1"/>
</dbReference>
<dbReference type="Pfam" id="PF00152">
    <property type="entry name" value="tRNA-synt_2"/>
    <property type="match status" value="1"/>
</dbReference>
<dbReference type="Pfam" id="PF01336">
    <property type="entry name" value="tRNA_anti-codon"/>
    <property type="match status" value="1"/>
</dbReference>
<dbReference type="PIRSF" id="PIRSF039101">
    <property type="entry name" value="LysRS2"/>
    <property type="match status" value="1"/>
</dbReference>
<dbReference type="PRINTS" id="PR00982">
    <property type="entry name" value="TRNASYNTHLYS"/>
</dbReference>
<dbReference type="SUPFAM" id="SSF55681">
    <property type="entry name" value="Class II aaRS and biotin synthetases"/>
    <property type="match status" value="1"/>
</dbReference>
<dbReference type="SUPFAM" id="SSF50249">
    <property type="entry name" value="Nucleic acid-binding proteins"/>
    <property type="match status" value="1"/>
</dbReference>
<dbReference type="PROSITE" id="PS50862">
    <property type="entry name" value="AA_TRNA_LIGASE_II"/>
    <property type="match status" value="1"/>
</dbReference>
<accession>A6VPH6</accession>
<keyword id="KW-0030">Aminoacyl-tRNA synthetase</keyword>
<keyword id="KW-0067">ATP-binding</keyword>
<keyword id="KW-0963">Cytoplasm</keyword>
<keyword id="KW-0436">Ligase</keyword>
<keyword id="KW-0460">Magnesium</keyword>
<keyword id="KW-0479">Metal-binding</keyword>
<keyword id="KW-0547">Nucleotide-binding</keyword>
<keyword id="KW-0648">Protein biosynthesis</keyword>
<keyword id="KW-1185">Reference proteome</keyword>
<name>SYK_ACTSZ</name>
<sequence length="503" mass="56840">MSEQQNTELDFHGEMAVRREKLAALRAKGNAFPNTFRRDALAQDLHHQYDETDGEQLKEKNPQVAVAGRIMTRRAMGKATFITIQDMSGKIQLYVACDNLPEGVYAEDVKSWDLGDIVGIKGTLFKTKTNELTVKAHEVQLLTKALRPLPDKFHGLSDQETRYRQRYLDLISNEESRRTFVIRSKVIAGIREYFIGKGFIEVETPMLQVIPGGAAARPFVTHHNALDIDMYLRIAPELYLKRLVVGGFERVFELNRNFRNEGVSVRHNPEFTMIEYYQAYADYHDLMDNTEELLRKLALDILGTTIVPYGEYEFDFGKPFERITMHDAVLKYGAEKGIVKEDLYDLERAKAAATKLGIEIQKSWGLGSVVNAIFEEVAEHHLIQPTFLTAHPAEISPLARRNDENPEVTDRFELFIGGREIGNGFSELNDAEDQAERFDAQVAAKDAGDDEAMFKDDDFVTALEHGLPPTAGEGLGIDRLAMLFANAPSIRDVILFPAMKHKA</sequence>
<feature type="chain" id="PRO_1000101093" description="Lysine--tRNA ligase">
    <location>
        <begin position="1"/>
        <end position="503"/>
    </location>
</feature>
<feature type="binding site" evidence="1">
    <location>
        <position position="413"/>
    </location>
    <ligand>
        <name>Mg(2+)</name>
        <dbReference type="ChEBI" id="CHEBI:18420"/>
        <label>1</label>
    </ligand>
</feature>
<feature type="binding site" evidence="1">
    <location>
        <position position="420"/>
    </location>
    <ligand>
        <name>Mg(2+)</name>
        <dbReference type="ChEBI" id="CHEBI:18420"/>
        <label>1</label>
    </ligand>
</feature>
<feature type="binding site" evidence="1">
    <location>
        <position position="420"/>
    </location>
    <ligand>
        <name>Mg(2+)</name>
        <dbReference type="ChEBI" id="CHEBI:18420"/>
        <label>2</label>
    </ligand>
</feature>
<comment type="catalytic activity">
    <reaction evidence="1">
        <text>tRNA(Lys) + L-lysine + ATP = L-lysyl-tRNA(Lys) + AMP + diphosphate</text>
        <dbReference type="Rhea" id="RHEA:20792"/>
        <dbReference type="Rhea" id="RHEA-COMP:9696"/>
        <dbReference type="Rhea" id="RHEA-COMP:9697"/>
        <dbReference type="ChEBI" id="CHEBI:30616"/>
        <dbReference type="ChEBI" id="CHEBI:32551"/>
        <dbReference type="ChEBI" id="CHEBI:33019"/>
        <dbReference type="ChEBI" id="CHEBI:78442"/>
        <dbReference type="ChEBI" id="CHEBI:78529"/>
        <dbReference type="ChEBI" id="CHEBI:456215"/>
        <dbReference type="EC" id="6.1.1.6"/>
    </reaction>
</comment>
<comment type="cofactor">
    <cofactor evidence="1">
        <name>Mg(2+)</name>
        <dbReference type="ChEBI" id="CHEBI:18420"/>
    </cofactor>
    <text evidence="1">Binds 3 Mg(2+) ions per subunit.</text>
</comment>
<comment type="subunit">
    <text evidence="1">Homodimer.</text>
</comment>
<comment type="subcellular location">
    <subcellularLocation>
        <location evidence="1">Cytoplasm</location>
    </subcellularLocation>
</comment>
<comment type="similarity">
    <text evidence="1">Belongs to the class-II aminoacyl-tRNA synthetase family.</text>
</comment>
<evidence type="ECO:0000255" key="1">
    <source>
        <dbReference type="HAMAP-Rule" id="MF_00252"/>
    </source>
</evidence>